<protein>
    <recommendedName>
        <fullName evidence="1">Lipoyl synthase</fullName>
        <ecNumber evidence="1">2.8.1.8</ecNumber>
    </recommendedName>
    <alternativeName>
        <fullName evidence="1">Lip-syn</fullName>
        <shortName evidence="1">LS</shortName>
    </alternativeName>
    <alternativeName>
        <fullName evidence="1">Lipoate synthase</fullName>
    </alternativeName>
    <alternativeName>
        <fullName evidence="1">Lipoic acid synthase</fullName>
    </alternativeName>
    <alternativeName>
        <fullName evidence="1">Sulfur insertion protein LipA</fullName>
    </alternativeName>
</protein>
<reference key="1">
    <citation type="journal article" date="2002" name="Nucleic Acids Res.">
        <title>Genome sequence of Oceanobacillus iheyensis isolated from the Iheya Ridge and its unexpected adaptive capabilities to extreme environments.</title>
        <authorList>
            <person name="Takami H."/>
            <person name="Takaki Y."/>
            <person name="Uchiyama I."/>
        </authorList>
    </citation>
    <scope>NUCLEOTIDE SEQUENCE [LARGE SCALE GENOMIC DNA]</scope>
    <source>
        <strain>DSM 14371 / CIP 107618 / JCM 11309 / KCTC 3954 / HTE831</strain>
    </source>
</reference>
<evidence type="ECO:0000255" key="1">
    <source>
        <dbReference type="HAMAP-Rule" id="MF_00206"/>
    </source>
</evidence>
<evidence type="ECO:0000255" key="2">
    <source>
        <dbReference type="PROSITE-ProRule" id="PRU01266"/>
    </source>
</evidence>
<comment type="function">
    <text evidence="1">Catalyzes the radical-mediated insertion of two sulfur atoms into the C-6 and C-8 positions of the octanoyl moiety bound to the lipoyl domains of lipoate-dependent enzymes, thereby converting the octanoylated domains into lipoylated derivatives.</text>
</comment>
<comment type="catalytic activity">
    <reaction evidence="1">
        <text>[[Fe-S] cluster scaffold protein carrying a second [4Fe-4S](2+) cluster] + N(6)-octanoyl-L-lysyl-[protein] + 2 oxidized [2Fe-2S]-[ferredoxin] + 2 S-adenosyl-L-methionine + 4 H(+) = [[Fe-S] cluster scaffold protein] + N(6)-[(R)-dihydrolipoyl]-L-lysyl-[protein] + 4 Fe(3+) + 2 hydrogen sulfide + 2 5'-deoxyadenosine + 2 L-methionine + 2 reduced [2Fe-2S]-[ferredoxin]</text>
        <dbReference type="Rhea" id="RHEA:16585"/>
        <dbReference type="Rhea" id="RHEA-COMP:9928"/>
        <dbReference type="Rhea" id="RHEA-COMP:10000"/>
        <dbReference type="Rhea" id="RHEA-COMP:10001"/>
        <dbReference type="Rhea" id="RHEA-COMP:10475"/>
        <dbReference type="Rhea" id="RHEA-COMP:14568"/>
        <dbReference type="Rhea" id="RHEA-COMP:14569"/>
        <dbReference type="ChEBI" id="CHEBI:15378"/>
        <dbReference type="ChEBI" id="CHEBI:17319"/>
        <dbReference type="ChEBI" id="CHEBI:29034"/>
        <dbReference type="ChEBI" id="CHEBI:29919"/>
        <dbReference type="ChEBI" id="CHEBI:33722"/>
        <dbReference type="ChEBI" id="CHEBI:33737"/>
        <dbReference type="ChEBI" id="CHEBI:33738"/>
        <dbReference type="ChEBI" id="CHEBI:57844"/>
        <dbReference type="ChEBI" id="CHEBI:59789"/>
        <dbReference type="ChEBI" id="CHEBI:78809"/>
        <dbReference type="ChEBI" id="CHEBI:83100"/>
        <dbReference type="EC" id="2.8.1.8"/>
    </reaction>
</comment>
<comment type="cofactor">
    <cofactor evidence="1">
        <name>[4Fe-4S] cluster</name>
        <dbReference type="ChEBI" id="CHEBI:49883"/>
    </cofactor>
    <text evidence="1">Binds 2 [4Fe-4S] clusters per subunit. One cluster is coordinated with 3 cysteines and an exchangeable S-adenosyl-L-methionine.</text>
</comment>
<comment type="pathway">
    <text evidence="1">Protein modification; protein lipoylation via endogenous pathway; protein N(6)-(lipoyl)lysine from octanoyl-[acyl-carrier-protein].</text>
</comment>
<comment type="subcellular location">
    <subcellularLocation>
        <location evidence="1">Cytoplasm</location>
    </subcellularLocation>
</comment>
<comment type="similarity">
    <text evidence="1">Belongs to the radical SAM superfamily. Lipoyl synthase family.</text>
</comment>
<organism>
    <name type="scientific">Oceanobacillus iheyensis (strain DSM 14371 / CIP 107618 / JCM 11309 / KCTC 3954 / HTE831)</name>
    <dbReference type="NCBI Taxonomy" id="221109"/>
    <lineage>
        <taxon>Bacteria</taxon>
        <taxon>Bacillati</taxon>
        <taxon>Bacillota</taxon>
        <taxon>Bacilli</taxon>
        <taxon>Bacillales</taxon>
        <taxon>Bacillaceae</taxon>
        <taxon>Oceanobacillus</taxon>
    </lineage>
</organism>
<feature type="chain" id="PRO_0000102331" description="Lipoyl synthase">
    <location>
        <begin position="1"/>
        <end position="314"/>
    </location>
</feature>
<feature type="domain" description="Radical SAM core" evidence="2">
    <location>
        <begin position="53"/>
        <end position="269"/>
    </location>
</feature>
<feature type="binding site" evidence="1">
    <location>
        <position position="40"/>
    </location>
    <ligand>
        <name>[4Fe-4S] cluster</name>
        <dbReference type="ChEBI" id="CHEBI:49883"/>
        <label>1</label>
    </ligand>
</feature>
<feature type="binding site" evidence="1">
    <location>
        <position position="45"/>
    </location>
    <ligand>
        <name>[4Fe-4S] cluster</name>
        <dbReference type="ChEBI" id="CHEBI:49883"/>
        <label>1</label>
    </ligand>
</feature>
<feature type="binding site" evidence="1">
    <location>
        <position position="51"/>
    </location>
    <ligand>
        <name>[4Fe-4S] cluster</name>
        <dbReference type="ChEBI" id="CHEBI:49883"/>
        <label>1</label>
    </ligand>
</feature>
<feature type="binding site" evidence="1">
    <location>
        <position position="67"/>
    </location>
    <ligand>
        <name>[4Fe-4S] cluster</name>
        <dbReference type="ChEBI" id="CHEBI:49883"/>
        <label>2</label>
        <note>4Fe-4S-S-AdoMet</note>
    </ligand>
</feature>
<feature type="binding site" evidence="1">
    <location>
        <position position="71"/>
    </location>
    <ligand>
        <name>[4Fe-4S] cluster</name>
        <dbReference type="ChEBI" id="CHEBI:49883"/>
        <label>2</label>
        <note>4Fe-4S-S-AdoMet</note>
    </ligand>
</feature>
<feature type="binding site" evidence="1">
    <location>
        <position position="74"/>
    </location>
    <ligand>
        <name>[4Fe-4S] cluster</name>
        <dbReference type="ChEBI" id="CHEBI:49883"/>
        <label>2</label>
        <note>4Fe-4S-S-AdoMet</note>
    </ligand>
</feature>
<feature type="binding site" evidence="1">
    <location>
        <position position="280"/>
    </location>
    <ligand>
        <name>[4Fe-4S] cluster</name>
        <dbReference type="ChEBI" id="CHEBI:49883"/>
        <label>1</label>
    </ligand>
</feature>
<gene>
    <name evidence="1" type="primary">lipA</name>
    <name type="ordered locus">OB1284</name>
</gene>
<accession>Q8ERL8</accession>
<name>LIPA_OCEIH</name>
<keyword id="KW-0004">4Fe-4S</keyword>
<keyword id="KW-0963">Cytoplasm</keyword>
<keyword id="KW-0408">Iron</keyword>
<keyword id="KW-0411">Iron-sulfur</keyword>
<keyword id="KW-0479">Metal-binding</keyword>
<keyword id="KW-1185">Reference proteome</keyword>
<keyword id="KW-0949">S-adenosyl-L-methionine</keyword>
<keyword id="KW-0808">Transferase</keyword>
<dbReference type="EC" id="2.8.1.8" evidence="1"/>
<dbReference type="EMBL" id="BA000028">
    <property type="protein sequence ID" value="BAC13240.1"/>
    <property type="molecule type" value="Genomic_DNA"/>
</dbReference>
<dbReference type="RefSeq" id="WP_011065688.1">
    <property type="nucleotide sequence ID" value="NC_004193.1"/>
</dbReference>
<dbReference type="SMR" id="Q8ERL8"/>
<dbReference type="STRING" id="221109.gene:10733524"/>
<dbReference type="KEGG" id="oih:OB1284"/>
<dbReference type="eggNOG" id="COG0320">
    <property type="taxonomic scope" value="Bacteria"/>
</dbReference>
<dbReference type="HOGENOM" id="CLU_033144_2_1_9"/>
<dbReference type="OrthoDB" id="9787898at2"/>
<dbReference type="PhylomeDB" id="Q8ERL8"/>
<dbReference type="Proteomes" id="UP000000822">
    <property type="component" value="Chromosome"/>
</dbReference>
<dbReference type="GO" id="GO:0005737">
    <property type="term" value="C:cytoplasm"/>
    <property type="evidence" value="ECO:0007669"/>
    <property type="project" value="UniProtKB-SubCell"/>
</dbReference>
<dbReference type="GO" id="GO:0051539">
    <property type="term" value="F:4 iron, 4 sulfur cluster binding"/>
    <property type="evidence" value="ECO:0007669"/>
    <property type="project" value="UniProtKB-UniRule"/>
</dbReference>
<dbReference type="GO" id="GO:0016992">
    <property type="term" value="F:lipoate synthase activity"/>
    <property type="evidence" value="ECO:0007669"/>
    <property type="project" value="UniProtKB-UniRule"/>
</dbReference>
<dbReference type="GO" id="GO:0046872">
    <property type="term" value="F:metal ion binding"/>
    <property type="evidence" value="ECO:0007669"/>
    <property type="project" value="UniProtKB-KW"/>
</dbReference>
<dbReference type="CDD" id="cd01335">
    <property type="entry name" value="Radical_SAM"/>
    <property type="match status" value="1"/>
</dbReference>
<dbReference type="FunFam" id="3.20.20.70:FF:000040">
    <property type="entry name" value="Lipoyl synthase"/>
    <property type="match status" value="1"/>
</dbReference>
<dbReference type="Gene3D" id="3.20.20.70">
    <property type="entry name" value="Aldolase class I"/>
    <property type="match status" value="1"/>
</dbReference>
<dbReference type="HAMAP" id="MF_00206">
    <property type="entry name" value="Lipoyl_synth"/>
    <property type="match status" value="1"/>
</dbReference>
<dbReference type="InterPro" id="IPR013785">
    <property type="entry name" value="Aldolase_TIM"/>
</dbReference>
<dbReference type="InterPro" id="IPR006638">
    <property type="entry name" value="Elp3/MiaA/NifB-like_rSAM"/>
</dbReference>
<dbReference type="InterPro" id="IPR031691">
    <property type="entry name" value="LIAS_N"/>
</dbReference>
<dbReference type="InterPro" id="IPR003698">
    <property type="entry name" value="Lipoyl_synth"/>
</dbReference>
<dbReference type="InterPro" id="IPR007197">
    <property type="entry name" value="rSAM"/>
</dbReference>
<dbReference type="NCBIfam" id="TIGR00510">
    <property type="entry name" value="lipA"/>
    <property type="match status" value="1"/>
</dbReference>
<dbReference type="NCBIfam" id="NF004019">
    <property type="entry name" value="PRK05481.1"/>
    <property type="match status" value="1"/>
</dbReference>
<dbReference type="NCBIfam" id="NF009544">
    <property type="entry name" value="PRK12928.1"/>
    <property type="match status" value="1"/>
</dbReference>
<dbReference type="PANTHER" id="PTHR10949">
    <property type="entry name" value="LIPOYL SYNTHASE"/>
    <property type="match status" value="1"/>
</dbReference>
<dbReference type="PANTHER" id="PTHR10949:SF0">
    <property type="entry name" value="LIPOYL SYNTHASE, MITOCHONDRIAL"/>
    <property type="match status" value="1"/>
</dbReference>
<dbReference type="Pfam" id="PF16881">
    <property type="entry name" value="LIAS_N"/>
    <property type="match status" value="1"/>
</dbReference>
<dbReference type="Pfam" id="PF04055">
    <property type="entry name" value="Radical_SAM"/>
    <property type="match status" value="1"/>
</dbReference>
<dbReference type="PIRSF" id="PIRSF005963">
    <property type="entry name" value="Lipoyl_synth"/>
    <property type="match status" value="1"/>
</dbReference>
<dbReference type="SFLD" id="SFLDF00271">
    <property type="entry name" value="lipoyl_synthase"/>
    <property type="match status" value="1"/>
</dbReference>
<dbReference type="SFLD" id="SFLDG01058">
    <property type="entry name" value="lipoyl_synthase_like"/>
    <property type="match status" value="1"/>
</dbReference>
<dbReference type="SMART" id="SM00729">
    <property type="entry name" value="Elp3"/>
    <property type="match status" value="1"/>
</dbReference>
<dbReference type="SUPFAM" id="SSF102114">
    <property type="entry name" value="Radical SAM enzymes"/>
    <property type="match status" value="1"/>
</dbReference>
<dbReference type="PROSITE" id="PS51918">
    <property type="entry name" value="RADICAL_SAM"/>
    <property type="match status" value="1"/>
</dbReference>
<sequence length="314" mass="35892">MSNQQTHVRKPDWLKTRINTNKSYRNLKKLMRDNRLNTVCEEARCPNLHECWSERKTATFMILGDTCTRGCRFCAVKTGLPNELDWGEPERVADSVTVMGLKHVVVTAVARDDLNDGGAAVFAETVRAIRRKNPGCTIEILPSDMKGDYESLHTLMDSGPDIFNHNIETVRRLTKRVRARAMYDRSLELLRRVKEIAPNTPTKSSIMVGLGEEKDEIIQAMDDLLAHNVDIVTLGQYLQPTKKHLEVVRYYHPDEFEELKNIALEKGFSHCESGPLVRSSYHADEQVSNAAAQRRIKYMKGVEKQENSQLDFNF</sequence>
<proteinExistence type="inferred from homology"/>